<comment type="catalytic activity">
    <reaction evidence="1">
        <text>beta-D-fructose 1,6-bisphosphate + H2O = beta-D-fructose 6-phosphate + phosphate</text>
        <dbReference type="Rhea" id="RHEA:11064"/>
        <dbReference type="ChEBI" id="CHEBI:15377"/>
        <dbReference type="ChEBI" id="CHEBI:32966"/>
        <dbReference type="ChEBI" id="CHEBI:43474"/>
        <dbReference type="ChEBI" id="CHEBI:57634"/>
        <dbReference type="EC" id="3.1.3.11"/>
    </reaction>
</comment>
<comment type="cofactor">
    <cofactor evidence="1">
        <name>Mn(2+)</name>
        <dbReference type="ChEBI" id="CHEBI:29035"/>
    </cofactor>
</comment>
<comment type="pathway">
    <text evidence="1">Carbohydrate biosynthesis; gluconeogenesis.</text>
</comment>
<comment type="similarity">
    <text evidence="1">Belongs to the FBPase class 3 family.</text>
</comment>
<accession>Q897W7</accession>
<feature type="chain" id="PRO_0000363089" description="Fructose-1,6-bisphosphatase class 3">
    <location>
        <begin position="1"/>
        <end position="662"/>
    </location>
</feature>
<evidence type="ECO:0000255" key="1">
    <source>
        <dbReference type="HAMAP-Rule" id="MF_01854"/>
    </source>
</evidence>
<reference key="1">
    <citation type="journal article" date="2003" name="Proc. Natl. Acad. Sci. U.S.A.">
        <title>The genome sequence of Clostridium tetani, the causative agent of tetanus disease.</title>
        <authorList>
            <person name="Brueggemann H."/>
            <person name="Baeumer S."/>
            <person name="Fricke W.F."/>
            <person name="Wiezer A."/>
            <person name="Liesegang H."/>
            <person name="Decker I."/>
            <person name="Herzberg C."/>
            <person name="Martinez-Arias R."/>
            <person name="Merkl R."/>
            <person name="Henne A."/>
            <person name="Gottschalk G."/>
        </authorList>
    </citation>
    <scope>NUCLEOTIDE SEQUENCE [LARGE SCALE GENOMIC DNA]</scope>
    <source>
        <strain>Massachusetts / E88</strain>
    </source>
</reference>
<dbReference type="EC" id="3.1.3.11" evidence="1"/>
<dbReference type="EMBL" id="AE015927">
    <property type="protein sequence ID" value="AAO35219.1"/>
    <property type="molecule type" value="Genomic_DNA"/>
</dbReference>
<dbReference type="RefSeq" id="WP_011098885.1">
    <property type="nucleotide sequence ID" value="NC_004557.1"/>
</dbReference>
<dbReference type="STRING" id="212717.CTC_00604"/>
<dbReference type="GeneID" id="24255124"/>
<dbReference type="KEGG" id="ctc:CTC_00604"/>
<dbReference type="HOGENOM" id="CLU_028392_2_0_9"/>
<dbReference type="OrthoDB" id="9779903at2"/>
<dbReference type="UniPathway" id="UPA00138"/>
<dbReference type="Proteomes" id="UP000001412">
    <property type="component" value="Chromosome"/>
</dbReference>
<dbReference type="GO" id="GO:0042132">
    <property type="term" value="F:fructose 1,6-bisphosphate 1-phosphatase activity"/>
    <property type="evidence" value="ECO:0007669"/>
    <property type="project" value="UniProtKB-UniRule"/>
</dbReference>
<dbReference type="GO" id="GO:0006094">
    <property type="term" value="P:gluconeogenesis"/>
    <property type="evidence" value="ECO:0007669"/>
    <property type="project" value="UniProtKB-UniRule"/>
</dbReference>
<dbReference type="HAMAP" id="MF_01854">
    <property type="entry name" value="FBPase_class3"/>
    <property type="match status" value="1"/>
</dbReference>
<dbReference type="InterPro" id="IPR009164">
    <property type="entry name" value="FBPtase_class3"/>
</dbReference>
<dbReference type="InterPro" id="IPR029052">
    <property type="entry name" value="Metallo-depent_PP-like"/>
</dbReference>
<dbReference type="Pfam" id="PF06874">
    <property type="entry name" value="FBPase_2"/>
    <property type="match status" value="1"/>
</dbReference>
<dbReference type="PIRSF" id="PIRSF000906">
    <property type="entry name" value="FBPtase_Bacill"/>
    <property type="match status" value="1"/>
</dbReference>
<dbReference type="SUPFAM" id="SSF56300">
    <property type="entry name" value="Metallo-dependent phosphatases"/>
    <property type="match status" value="2"/>
</dbReference>
<protein>
    <recommendedName>
        <fullName evidence="1">Fructose-1,6-bisphosphatase class 3</fullName>
        <shortName evidence="1">FBPase class 3</shortName>
        <ecNumber evidence="1">3.1.3.11</ecNumber>
    </recommendedName>
    <alternativeName>
        <fullName evidence="1">D-fructose-1,6-bisphosphate 1-phosphohydrolase class 3</fullName>
    </alternativeName>
</protein>
<keyword id="KW-0119">Carbohydrate metabolism</keyword>
<keyword id="KW-0378">Hydrolase</keyword>
<keyword id="KW-0464">Manganese</keyword>
<keyword id="KW-1185">Reference proteome</keyword>
<sequence length="662" mass="76383">MTLYDEDNINLIKDDLRYLKLLSTKYHNIPSACSEIINLQAILNLPKGTEHFISDIHGEYESFTHMLKNASGVIKRKLDDIFGTSLMDKDKDSLATLIYYPKEKLEILKESNNDLEEWYKVTLYRLIQVCKSVSSKYTRSKVRKALPKNFSYIIEELLNEQADRVNKQEYYSGIINTIVDIGCADSLIIEISKVIQKLVVDRLHIIGDIYDRGPGAEIIMDALMDHHSMDIQWGNHDILWMGAASGSKACTANVLRISLRYANLSTVEDGYGINLLPLATFAMKYYGNDPCESFIPKALDKMLDESDKNLYAKMHKAISIIQFKLEGQKIKRHPEFKLENMLLLDKINFDDGTITFEGSTYKLNDTNLPTIDPKNPYKLTKEESELIEKLQGSFLNSEKLQKHIRFMYSIGSLYLVYNSNLLFHGCIPLNEDSSFRTLNICNKEYSGKSLLDLFDKYAREAYYYKDDDNVKNYAMDMMWYLWCGPISPLFGKHKMTTFERYFIDDKKTHKEIKDPYYTYRDSEELCNRIFEEFQLDLEKSHIINGHIPVKTKNGESPVMANGKLLVIDGGFCKAYQPQTGIAGYTLIYNSYGFLLSSHEPFESTKKAIEEEQDILSSTVILENSVTRKRVMDTDIGKELKEQIKNLKKLLVAYRKGLIQENI</sequence>
<organism>
    <name type="scientific">Clostridium tetani (strain Massachusetts / E88)</name>
    <dbReference type="NCBI Taxonomy" id="212717"/>
    <lineage>
        <taxon>Bacteria</taxon>
        <taxon>Bacillati</taxon>
        <taxon>Bacillota</taxon>
        <taxon>Clostridia</taxon>
        <taxon>Eubacteriales</taxon>
        <taxon>Clostridiaceae</taxon>
        <taxon>Clostridium</taxon>
    </lineage>
</organism>
<proteinExistence type="inferred from homology"/>
<name>F16PC_CLOTE</name>
<gene>
    <name evidence="1" type="primary">fbp</name>
    <name type="ordered locus">CTC_00604</name>
</gene>